<protein>
    <recommendedName>
        <fullName evidence="1">2-dehydropantoate 2-reductase</fullName>
        <ecNumber evidence="1">1.1.1.169</ecNumber>
    </recommendedName>
    <alternativeName>
        <fullName evidence="1">Ketopantoate reductase</fullName>
        <shortName evidence="1">KPR</shortName>
    </alternativeName>
</protein>
<name>PANE_NOSS1</name>
<dbReference type="EC" id="1.1.1.169" evidence="1"/>
<dbReference type="EMBL" id="BA000019">
    <property type="protein sequence ID" value="BAB73276.1"/>
    <property type="molecule type" value="Genomic_DNA"/>
</dbReference>
<dbReference type="PIR" id="AD1971">
    <property type="entry name" value="AD1971"/>
</dbReference>
<dbReference type="RefSeq" id="WP_010995491.1">
    <property type="nucleotide sequence ID" value="NZ_RSCN01000060.1"/>
</dbReference>
<dbReference type="SMR" id="Q8YX96"/>
<dbReference type="STRING" id="103690.gene:10493333"/>
<dbReference type="KEGG" id="ana:all1319"/>
<dbReference type="eggNOG" id="COG1893">
    <property type="taxonomic scope" value="Bacteria"/>
</dbReference>
<dbReference type="OrthoDB" id="9793586at2"/>
<dbReference type="UniPathway" id="UPA00028">
    <property type="reaction ID" value="UER00004"/>
</dbReference>
<dbReference type="Proteomes" id="UP000002483">
    <property type="component" value="Chromosome"/>
</dbReference>
<dbReference type="GO" id="GO:0005737">
    <property type="term" value="C:cytoplasm"/>
    <property type="evidence" value="ECO:0007669"/>
    <property type="project" value="UniProtKB-SubCell"/>
</dbReference>
<dbReference type="GO" id="GO:0008677">
    <property type="term" value="F:2-dehydropantoate 2-reductase activity"/>
    <property type="evidence" value="ECO:0007669"/>
    <property type="project" value="UniProtKB-EC"/>
</dbReference>
<dbReference type="GO" id="GO:0015940">
    <property type="term" value="P:pantothenate biosynthetic process"/>
    <property type="evidence" value="ECO:0007669"/>
    <property type="project" value="UniProtKB-UniPathway"/>
</dbReference>
<dbReference type="FunFam" id="1.10.1040.10:FF:000017">
    <property type="entry name" value="2-dehydropantoate 2-reductase"/>
    <property type="match status" value="1"/>
</dbReference>
<dbReference type="Gene3D" id="1.10.1040.10">
    <property type="entry name" value="N-(1-d-carboxylethyl)-l-norvaline Dehydrogenase, domain 2"/>
    <property type="match status" value="1"/>
</dbReference>
<dbReference type="Gene3D" id="3.40.50.720">
    <property type="entry name" value="NAD(P)-binding Rossmann-like Domain"/>
    <property type="match status" value="1"/>
</dbReference>
<dbReference type="InterPro" id="IPR008927">
    <property type="entry name" value="6-PGluconate_DH-like_C_sf"/>
</dbReference>
<dbReference type="InterPro" id="IPR013328">
    <property type="entry name" value="6PGD_dom2"/>
</dbReference>
<dbReference type="InterPro" id="IPR003710">
    <property type="entry name" value="ApbA"/>
</dbReference>
<dbReference type="InterPro" id="IPR013752">
    <property type="entry name" value="KPA_reductase"/>
</dbReference>
<dbReference type="InterPro" id="IPR051402">
    <property type="entry name" value="KPR-Related"/>
</dbReference>
<dbReference type="InterPro" id="IPR013332">
    <property type="entry name" value="KPR_N"/>
</dbReference>
<dbReference type="InterPro" id="IPR036291">
    <property type="entry name" value="NAD(P)-bd_dom_sf"/>
</dbReference>
<dbReference type="NCBIfam" id="TIGR00745">
    <property type="entry name" value="apbA_panE"/>
    <property type="match status" value="1"/>
</dbReference>
<dbReference type="NCBIfam" id="NF004887">
    <property type="entry name" value="PRK06249.1"/>
    <property type="match status" value="1"/>
</dbReference>
<dbReference type="PANTHER" id="PTHR21708:SF26">
    <property type="entry name" value="2-DEHYDROPANTOATE 2-REDUCTASE"/>
    <property type="match status" value="1"/>
</dbReference>
<dbReference type="PANTHER" id="PTHR21708">
    <property type="entry name" value="PROBABLE 2-DEHYDROPANTOATE 2-REDUCTASE"/>
    <property type="match status" value="1"/>
</dbReference>
<dbReference type="Pfam" id="PF02558">
    <property type="entry name" value="ApbA"/>
    <property type="match status" value="1"/>
</dbReference>
<dbReference type="Pfam" id="PF08546">
    <property type="entry name" value="ApbA_C"/>
    <property type="match status" value="1"/>
</dbReference>
<dbReference type="SUPFAM" id="SSF48179">
    <property type="entry name" value="6-phosphogluconate dehydrogenase C-terminal domain-like"/>
    <property type="match status" value="1"/>
</dbReference>
<dbReference type="SUPFAM" id="SSF51735">
    <property type="entry name" value="NAD(P)-binding Rossmann-fold domains"/>
    <property type="match status" value="1"/>
</dbReference>
<organism>
    <name type="scientific">Nostoc sp. (strain PCC 7120 / SAG 25.82 / UTEX 2576)</name>
    <dbReference type="NCBI Taxonomy" id="103690"/>
    <lineage>
        <taxon>Bacteria</taxon>
        <taxon>Bacillati</taxon>
        <taxon>Cyanobacteriota</taxon>
        <taxon>Cyanophyceae</taxon>
        <taxon>Nostocales</taxon>
        <taxon>Nostocaceae</taxon>
        <taxon>Nostoc</taxon>
    </lineage>
</organism>
<comment type="function">
    <text evidence="1">Catalyzes the NADPH-dependent reduction of ketopantoate into pantoic acid.</text>
</comment>
<comment type="catalytic activity">
    <reaction evidence="1">
        <text>(R)-pantoate + NADP(+) = 2-dehydropantoate + NADPH + H(+)</text>
        <dbReference type="Rhea" id="RHEA:16233"/>
        <dbReference type="ChEBI" id="CHEBI:11561"/>
        <dbReference type="ChEBI" id="CHEBI:15378"/>
        <dbReference type="ChEBI" id="CHEBI:15980"/>
        <dbReference type="ChEBI" id="CHEBI:57783"/>
        <dbReference type="ChEBI" id="CHEBI:58349"/>
        <dbReference type="EC" id="1.1.1.169"/>
    </reaction>
</comment>
<comment type="pathway">
    <text evidence="1">Cofactor biosynthesis; (R)-pantothenate biosynthesis; (R)-pantoate from 3-methyl-2-oxobutanoate: step 2/2.</text>
</comment>
<comment type="subcellular location">
    <subcellularLocation>
        <location evidence="1">Cytoplasm</location>
    </subcellularLocation>
</comment>
<comment type="similarity">
    <text evidence="2">Belongs to the ketopantoate reductase family.</text>
</comment>
<sequence length="319" mass="35574">MNERKYAILGTGALGGYYGAKLQKAGSDVHFLLKSDYEKVNQDGLLVESKDGDFTLPQVNAYNDVAKMPKCDVVVVALKTTQNHLLPKLLPPIVKNDGIVLVLQNGLGVEEEIAEILPQVHIIGGLCFLCSNKVGAGYIHHLDYGQITLGEYAHGYSNMGITDRMQQISHDFQTAGISIELLEDLLLGRWKKLVWNIPYNGLSVVLNARTDELMADTYTRTLVEQLMYEVKAGAKSMGRNIPDSFIQTMLDYTVKMKPYRTSMKIDYDECRPLEVEAIVGNPLHKAQEVGVNLPQINCLYHQLKFLDGRNRTGQLTVDS</sequence>
<reference key="1">
    <citation type="journal article" date="2001" name="DNA Res.">
        <title>Complete genomic sequence of the filamentous nitrogen-fixing cyanobacterium Anabaena sp. strain PCC 7120.</title>
        <authorList>
            <person name="Kaneko T."/>
            <person name="Nakamura Y."/>
            <person name="Wolk C.P."/>
            <person name="Kuritz T."/>
            <person name="Sasamoto S."/>
            <person name="Watanabe A."/>
            <person name="Iriguchi M."/>
            <person name="Ishikawa A."/>
            <person name="Kawashima K."/>
            <person name="Kimura T."/>
            <person name="Kishida Y."/>
            <person name="Kohara M."/>
            <person name="Matsumoto M."/>
            <person name="Matsuno A."/>
            <person name="Muraki A."/>
            <person name="Nakazaki N."/>
            <person name="Shimpo S."/>
            <person name="Sugimoto M."/>
            <person name="Takazawa M."/>
            <person name="Yamada M."/>
            <person name="Yasuda M."/>
            <person name="Tabata S."/>
        </authorList>
    </citation>
    <scope>NUCLEOTIDE SEQUENCE [LARGE SCALE GENOMIC DNA]</scope>
    <source>
        <strain>PCC 7120 / SAG 25.82 / UTEX 2576</strain>
    </source>
</reference>
<proteinExistence type="inferred from homology"/>
<keyword id="KW-0963">Cytoplasm</keyword>
<keyword id="KW-0521">NADP</keyword>
<keyword id="KW-0560">Oxidoreductase</keyword>
<keyword id="KW-0566">Pantothenate biosynthesis</keyword>
<keyword id="KW-1185">Reference proteome</keyword>
<evidence type="ECO:0000250" key="1">
    <source>
        <dbReference type="UniProtKB" id="P0A9J4"/>
    </source>
</evidence>
<evidence type="ECO:0000305" key="2"/>
<gene>
    <name type="ordered locus">all1319</name>
</gene>
<accession>Q8YX96</accession>
<feature type="chain" id="PRO_0000157309" description="2-dehydropantoate 2-reductase">
    <location>
        <begin position="1"/>
        <end position="319"/>
    </location>
</feature>
<feature type="active site" description="Proton donor" evidence="1">
    <location>
        <position position="192"/>
    </location>
</feature>
<feature type="binding site" evidence="1">
    <location>
        <begin position="10"/>
        <end position="15"/>
    </location>
    <ligand>
        <name>NADP(+)</name>
        <dbReference type="ChEBI" id="CHEBI:58349"/>
    </ligand>
</feature>
<feature type="binding site" evidence="1">
    <location>
        <position position="105"/>
    </location>
    <ligand>
        <name>NADP(+)</name>
        <dbReference type="ChEBI" id="CHEBI:58349"/>
    </ligand>
</feature>
<feature type="binding site" evidence="1">
    <location>
        <position position="105"/>
    </location>
    <ligand>
        <name>substrate</name>
    </ligand>
</feature>
<feature type="binding site" evidence="1">
    <location>
        <position position="196"/>
    </location>
    <ligand>
        <name>substrate</name>
    </ligand>
</feature>
<feature type="binding site" evidence="1">
    <location>
        <position position="200"/>
    </location>
    <ligand>
        <name>substrate</name>
    </ligand>
</feature>
<feature type="binding site" evidence="1">
    <location>
        <position position="262"/>
    </location>
    <ligand>
        <name>substrate</name>
    </ligand>
</feature>
<feature type="binding site" evidence="1">
    <location>
        <position position="274"/>
    </location>
    <ligand>
        <name>NADP(+)</name>
        <dbReference type="ChEBI" id="CHEBI:58349"/>
    </ligand>
</feature>